<comment type="subunit">
    <text evidence="1">Part of the 30S ribosomal subunit.</text>
</comment>
<comment type="subcellular location">
    <subcellularLocation>
        <location>Plastid</location>
    </subcellularLocation>
</comment>
<comment type="similarity">
    <text evidence="2">Belongs to the universal ribosomal protein uS3 family.</text>
</comment>
<feature type="chain" id="PRO_0000130270" description="Small ribosomal subunit protein uS3c">
    <location>
        <begin position="1"/>
        <end position="219"/>
    </location>
</feature>
<feature type="domain" description="KH type-2">
    <location>
        <begin position="39"/>
        <end position="111"/>
    </location>
</feature>
<accession>P58133</accession>
<dbReference type="EMBL" id="AJ294725">
    <property type="protein sequence ID" value="CAC24598.1"/>
    <property type="molecule type" value="Genomic_DNA"/>
</dbReference>
<dbReference type="RefSeq" id="NP_074987.1">
    <property type="nucleotide sequence ID" value="NC_002652.1"/>
</dbReference>
<dbReference type="SMR" id="P58133"/>
<dbReference type="GeneID" id="802494"/>
<dbReference type="GO" id="GO:0022627">
    <property type="term" value="C:cytosolic small ribosomal subunit"/>
    <property type="evidence" value="ECO:0007669"/>
    <property type="project" value="TreeGrafter"/>
</dbReference>
<dbReference type="GO" id="GO:0009536">
    <property type="term" value="C:plastid"/>
    <property type="evidence" value="ECO:0007669"/>
    <property type="project" value="UniProtKB-SubCell"/>
</dbReference>
<dbReference type="GO" id="GO:0003723">
    <property type="term" value="F:RNA binding"/>
    <property type="evidence" value="ECO:0007669"/>
    <property type="project" value="UniProtKB-KW"/>
</dbReference>
<dbReference type="GO" id="GO:0003735">
    <property type="term" value="F:structural constituent of ribosome"/>
    <property type="evidence" value="ECO:0007669"/>
    <property type="project" value="InterPro"/>
</dbReference>
<dbReference type="GO" id="GO:0006412">
    <property type="term" value="P:translation"/>
    <property type="evidence" value="ECO:0007669"/>
    <property type="project" value="InterPro"/>
</dbReference>
<dbReference type="CDD" id="cd02412">
    <property type="entry name" value="KH-II_30S_S3"/>
    <property type="match status" value="1"/>
</dbReference>
<dbReference type="Gene3D" id="3.30.300.20">
    <property type="match status" value="1"/>
</dbReference>
<dbReference type="Gene3D" id="3.30.1140.32">
    <property type="entry name" value="Ribosomal protein S3, C-terminal domain"/>
    <property type="match status" value="1"/>
</dbReference>
<dbReference type="HAMAP" id="MF_01309_B">
    <property type="entry name" value="Ribosomal_uS3_B"/>
    <property type="match status" value="1"/>
</dbReference>
<dbReference type="InterPro" id="IPR015946">
    <property type="entry name" value="KH_dom-like_a/b"/>
</dbReference>
<dbReference type="InterPro" id="IPR009019">
    <property type="entry name" value="KH_sf_prok-type"/>
</dbReference>
<dbReference type="InterPro" id="IPR036419">
    <property type="entry name" value="Ribosomal_S3_C_sf"/>
</dbReference>
<dbReference type="InterPro" id="IPR005704">
    <property type="entry name" value="Ribosomal_uS3_bac-typ"/>
</dbReference>
<dbReference type="InterPro" id="IPR001351">
    <property type="entry name" value="Ribosomal_uS3_C"/>
</dbReference>
<dbReference type="InterPro" id="IPR018280">
    <property type="entry name" value="Ribosomal_uS3_CS"/>
</dbReference>
<dbReference type="NCBIfam" id="TIGR01009">
    <property type="entry name" value="rpsC_bact"/>
    <property type="match status" value="1"/>
</dbReference>
<dbReference type="PANTHER" id="PTHR11760">
    <property type="entry name" value="30S/40S RIBOSOMAL PROTEIN S3"/>
    <property type="match status" value="1"/>
</dbReference>
<dbReference type="PANTHER" id="PTHR11760:SF19">
    <property type="entry name" value="SMALL RIBOSOMAL SUBUNIT PROTEIN US3C"/>
    <property type="match status" value="1"/>
</dbReference>
<dbReference type="Pfam" id="PF00189">
    <property type="entry name" value="Ribosomal_S3_C"/>
    <property type="match status" value="1"/>
</dbReference>
<dbReference type="SUPFAM" id="SSF54814">
    <property type="entry name" value="Prokaryotic type KH domain (KH-domain type II)"/>
    <property type="match status" value="1"/>
</dbReference>
<dbReference type="SUPFAM" id="SSF54821">
    <property type="entry name" value="Ribosomal protein S3 C-terminal domain"/>
    <property type="match status" value="1"/>
</dbReference>
<dbReference type="PROSITE" id="PS00548">
    <property type="entry name" value="RIBOSOMAL_S3"/>
    <property type="match status" value="1"/>
</dbReference>
<sequence>MGQKTNPNGLRFGKFKKHFSCWYTENKNYSHFVKQDIFIRKFLMEKIKNVFISLIEIEKDNKETVIFIHYLNFSKFNKVETNSEKNEINLFKLKNLLLKSLNSFFNVKINFNEFIIKLIEIENPILDVRFIANDIRYKLEKRMNFRKIVNSTIANIINKGIKGIKIKLSGRLNDAEMAREESFREGKVPLNTLKANIDYFHCTAKTLSGSLGIKVWLNK</sequence>
<evidence type="ECO:0000250" key="1"/>
<evidence type="ECO:0000305" key="2"/>
<protein>
    <recommendedName>
        <fullName evidence="2">Small ribosomal subunit protein uS3c</fullName>
    </recommendedName>
    <alternativeName>
        <fullName>Plastid 30S ribosomal protein S3</fullName>
    </alternativeName>
</protein>
<keyword id="KW-0934">Plastid</keyword>
<keyword id="KW-0687">Ribonucleoprotein</keyword>
<keyword id="KW-0689">Ribosomal protein</keyword>
<keyword id="KW-0694">RNA-binding</keyword>
<gene>
    <name type="primary">rps3</name>
</gene>
<geneLocation type="non-photosynthetic plastid"/>
<organism>
    <name type="scientific">Euglena longa</name>
    <name type="common">Euglenophycean alga</name>
    <name type="synonym">Astasia longa</name>
    <dbReference type="NCBI Taxonomy" id="3037"/>
    <lineage>
        <taxon>Eukaryota</taxon>
        <taxon>Discoba</taxon>
        <taxon>Euglenozoa</taxon>
        <taxon>Euglenida</taxon>
        <taxon>Spirocuta</taxon>
        <taxon>Euglenophyceae</taxon>
        <taxon>Euglenales</taxon>
        <taxon>Euglenaceae</taxon>
        <taxon>Euglena</taxon>
    </lineage>
</organism>
<name>RR3_EUGLO</name>
<proteinExistence type="inferred from homology"/>
<reference key="1">
    <citation type="journal article" date="2000" name="Protist">
        <title>Complete gene map of the plastid genome of the nonphotosynthetic euglenoid flagellate Astasia longa.</title>
        <authorList>
            <person name="Gockel G."/>
            <person name="Hachtel W."/>
        </authorList>
    </citation>
    <scope>NUCLEOTIDE SEQUENCE [LARGE SCALE GENOMIC DNA]</scope>
    <source>
        <strain>CCAP 1204-17a</strain>
    </source>
</reference>